<comment type="function">
    <text evidence="1">Involved in the binding of tRNA to the ribosomes.</text>
</comment>
<comment type="subunit">
    <text evidence="1">Part of the 30S ribosomal subunit.</text>
</comment>
<comment type="similarity">
    <text evidence="1">Belongs to the universal ribosomal protein uS10 family.</text>
</comment>
<keyword id="KW-0687">Ribonucleoprotein</keyword>
<keyword id="KW-0689">Ribosomal protein</keyword>
<gene>
    <name evidence="1" type="primary">rpsJ</name>
    <name type="ordered locus">XF_1151</name>
</gene>
<accession>P66348</accession>
<accession>Q9PE77</accession>
<feature type="chain" id="PRO_0000146637" description="Small ribosomal subunit protein uS10">
    <location>
        <begin position="1"/>
        <end position="103"/>
    </location>
</feature>
<protein>
    <recommendedName>
        <fullName evidence="1">Small ribosomal subunit protein uS10</fullName>
    </recommendedName>
    <alternativeName>
        <fullName evidence="2">30S ribosomal protein S10</fullName>
    </alternativeName>
</protein>
<name>RS10_XYLFA</name>
<reference key="1">
    <citation type="journal article" date="2000" name="Nature">
        <title>The genome sequence of the plant pathogen Xylella fastidiosa.</title>
        <authorList>
            <person name="Simpson A.J.G."/>
            <person name="Reinach F.C."/>
            <person name="Arruda P."/>
            <person name="Abreu F.A."/>
            <person name="Acencio M."/>
            <person name="Alvarenga R."/>
            <person name="Alves L.M.C."/>
            <person name="Araya J.E."/>
            <person name="Baia G.S."/>
            <person name="Baptista C.S."/>
            <person name="Barros M.H."/>
            <person name="Bonaccorsi E.D."/>
            <person name="Bordin S."/>
            <person name="Bove J.M."/>
            <person name="Briones M.R.S."/>
            <person name="Bueno M.R.P."/>
            <person name="Camargo A.A."/>
            <person name="Camargo L.E.A."/>
            <person name="Carraro D.M."/>
            <person name="Carrer H."/>
            <person name="Colauto N.B."/>
            <person name="Colombo C."/>
            <person name="Costa F.F."/>
            <person name="Costa M.C.R."/>
            <person name="Costa-Neto C.M."/>
            <person name="Coutinho L.L."/>
            <person name="Cristofani M."/>
            <person name="Dias-Neto E."/>
            <person name="Docena C."/>
            <person name="El-Dorry H."/>
            <person name="Facincani A.P."/>
            <person name="Ferreira A.J.S."/>
            <person name="Ferreira V.C.A."/>
            <person name="Ferro J.A."/>
            <person name="Fraga J.S."/>
            <person name="Franca S.C."/>
            <person name="Franco M.C."/>
            <person name="Frohme M."/>
            <person name="Furlan L.R."/>
            <person name="Garnier M."/>
            <person name="Goldman G.H."/>
            <person name="Goldman M.H.S."/>
            <person name="Gomes S.L."/>
            <person name="Gruber A."/>
            <person name="Ho P.L."/>
            <person name="Hoheisel J.D."/>
            <person name="Junqueira M.L."/>
            <person name="Kemper E.L."/>
            <person name="Kitajima J.P."/>
            <person name="Krieger J.E."/>
            <person name="Kuramae E.E."/>
            <person name="Laigret F."/>
            <person name="Lambais M.R."/>
            <person name="Leite L.C.C."/>
            <person name="Lemos E.G.M."/>
            <person name="Lemos M.V.F."/>
            <person name="Lopes S.A."/>
            <person name="Lopes C.R."/>
            <person name="Machado J.A."/>
            <person name="Machado M.A."/>
            <person name="Madeira A.M.B.N."/>
            <person name="Madeira H.M.F."/>
            <person name="Marino C.L."/>
            <person name="Marques M.V."/>
            <person name="Martins E.A.L."/>
            <person name="Martins E.M.F."/>
            <person name="Matsukuma A.Y."/>
            <person name="Menck C.F.M."/>
            <person name="Miracca E.C."/>
            <person name="Miyaki C.Y."/>
            <person name="Monteiro-Vitorello C.B."/>
            <person name="Moon D.H."/>
            <person name="Nagai M.A."/>
            <person name="Nascimento A.L.T.O."/>
            <person name="Netto L.E.S."/>
            <person name="Nhani A. Jr."/>
            <person name="Nobrega F.G."/>
            <person name="Nunes L.R."/>
            <person name="Oliveira M.A."/>
            <person name="de Oliveira M.C."/>
            <person name="de Oliveira R.C."/>
            <person name="Palmieri D.A."/>
            <person name="Paris A."/>
            <person name="Peixoto B.R."/>
            <person name="Pereira G.A.G."/>
            <person name="Pereira H.A. Jr."/>
            <person name="Pesquero J.B."/>
            <person name="Quaggio R.B."/>
            <person name="Roberto P.G."/>
            <person name="Rodrigues V."/>
            <person name="de Rosa A.J.M."/>
            <person name="de Rosa V.E. Jr."/>
            <person name="de Sa R.G."/>
            <person name="Santelli R.V."/>
            <person name="Sawasaki H.E."/>
            <person name="da Silva A.C.R."/>
            <person name="da Silva A.M."/>
            <person name="da Silva F.R."/>
            <person name="Silva W.A. Jr."/>
            <person name="da Silveira J.F."/>
            <person name="Silvestri M.L.Z."/>
            <person name="Siqueira W.J."/>
            <person name="de Souza A.A."/>
            <person name="de Souza A.P."/>
            <person name="Terenzi M.F."/>
            <person name="Truffi D."/>
            <person name="Tsai S.M."/>
            <person name="Tsuhako M.H."/>
            <person name="Vallada H."/>
            <person name="Van Sluys M.A."/>
            <person name="Verjovski-Almeida S."/>
            <person name="Vettore A.L."/>
            <person name="Zago M.A."/>
            <person name="Zatz M."/>
            <person name="Meidanis J."/>
            <person name="Setubal J.C."/>
        </authorList>
    </citation>
    <scope>NUCLEOTIDE SEQUENCE [LARGE SCALE GENOMIC DNA]</scope>
    <source>
        <strain>9a5c</strain>
    </source>
</reference>
<organism>
    <name type="scientific">Xylella fastidiosa (strain 9a5c)</name>
    <dbReference type="NCBI Taxonomy" id="160492"/>
    <lineage>
        <taxon>Bacteria</taxon>
        <taxon>Pseudomonadati</taxon>
        <taxon>Pseudomonadota</taxon>
        <taxon>Gammaproteobacteria</taxon>
        <taxon>Lysobacterales</taxon>
        <taxon>Lysobacteraceae</taxon>
        <taxon>Xylella</taxon>
    </lineage>
</organism>
<dbReference type="EMBL" id="AE003849">
    <property type="protein sequence ID" value="AAF83961.1"/>
    <property type="molecule type" value="Genomic_DNA"/>
</dbReference>
<dbReference type="PIR" id="G82716">
    <property type="entry name" value="G82716"/>
</dbReference>
<dbReference type="RefSeq" id="WP_004090086.1">
    <property type="nucleotide sequence ID" value="NC_002488.3"/>
</dbReference>
<dbReference type="SMR" id="P66348"/>
<dbReference type="STRING" id="160492.XF_1151"/>
<dbReference type="KEGG" id="xfa:XF_1151"/>
<dbReference type="eggNOG" id="COG0051">
    <property type="taxonomic scope" value="Bacteria"/>
</dbReference>
<dbReference type="HOGENOM" id="CLU_122625_1_3_6"/>
<dbReference type="Proteomes" id="UP000000812">
    <property type="component" value="Chromosome"/>
</dbReference>
<dbReference type="GO" id="GO:1990904">
    <property type="term" value="C:ribonucleoprotein complex"/>
    <property type="evidence" value="ECO:0007669"/>
    <property type="project" value="UniProtKB-KW"/>
</dbReference>
<dbReference type="GO" id="GO:0005840">
    <property type="term" value="C:ribosome"/>
    <property type="evidence" value="ECO:0007669"/>
    <property type="project" value="UniProtKB-KW"/>
</dbReference>
<dbReference type="GO" id="GO:0003735">
    <property type="term" value="F:structural constituent of ribosome"/>
    <property type="evidence" value="ECO:0007669"/>
    <property type="project" value="InterPro"/>
</dbReference>
<dbReference type="GO" id="GO:0000049">
    <property type="term" value="F:tRNA binding"/>
    <property type="evidence" value="ECO:0007669"/>
    <property type="project" value="UniProtKB-UniRule"/>
</dbReference>
<dbReference type="GO" id="GO:0006412">
    <property type="term" value="P:translation"/>
    <property type="evidence" value="ECO:0007669"/>
    <property type="project" value="UniProtKB-UniRule"/>
</dbReference>
<dbReference type="FunFam" id="3.30.70.600:FF:000003">
    <property type="entry name" value="30S ribosomal protein S10"/>
    <property type="match status" value="1"/>
</dbReference>
<dbReference type="Gene3D" id="3.30.70.600">
    <property type="entry name" value="Ribosomal protein S10 domain"/>
    <property type="match status" value="1"/>
</dbReference>
<dbReference type="HAMAP" id="MF_00508">
    <property type="entry name" value="Ribosomal_uS10"/>
    <property type="match status" value="1"/>
</dbReference>
<dbReference type="InterPro" id="IPR001848">
    <property type="entry name" value="Ribosomal_uS10"/>
</dbReference>
<dbReference type="InterPro" id="IPR018268">
    <property type="entry name" value="Ribosomal_uS10_CS"/>
</dbReference>
<dbReference type="InterPro" id="IPR027486">
    <property type="entry name" value="Ribosomal_uS10_dom"/>
</dbReference>
<dbReference type="InterPro" id="IPR036838">
    <property type="entry name" value="Ribosomal_uS10_dom_sf"/>
</dbReference>
<dbReference type="NCBIfam" id="NF001861">
    <property type="entry name" value="PRK00596.1"/>
    <property type="match status" value="1"/>
</dbReference>
<dbReference type="NCBIfam" id="TIGR01049">
    <property type="entry name" value="rpsJ_bact"/>
    <property type="match status" value="1"/>
</dbReference>
<dbReference type="PANTHER" id="PTHR11700">
    <property type="entry name" value="30S RIBOSOMAL PROTEIN S10 FAMILY MEMBER"/>
    <property type="match status" value="1"/>
</dbReference>
<dbReference type="Pfam" id="PF00338">
    <property type="entry name" value="Ribosomal_S10"/>
    <property type="match status" value="1"/>
</dbReference>
<dbReference type="PRINTS" id="PR00971">
    <property type="entry name" value="RIBOSOMALS10"/>
</dbReference>
<dbReference type="SMART" id="SM01403">
    <property type="entry name" value="Ribosomal_S10"/>
    <property type="match status" value="1"/>
</dbReference>
<dbReference type="SUPFAM" id="SSF54999">
    <property type="entry name" value="Ribosomal protein S10"/>
    <property type="match status" value="1"/>
</dbReference>
<dbReference type="PROSITE" id="PS00361">
    <property type="entry name" value="RIBOSOMAL_S10"/>
    <property type="match status" value="1"/>
</dbReference>
<sequence>MADQKIQIRLKAFDCRLIDRSAGEIVETAKRTGAHVRGPIPLPTKIERCTILVSPHADKDARDQYETCTYKRVLYIVDPNDKTVDALMKLELAAGVDVQIKLT</sequence>
<proteinExistence type="inferred from homology"/>
<evidence type="ECO:0000255" key="1">
    <source>
        <dbReference type="HAMAP-Rule" id="MF_00508"/>
    </source>
</evidence>
<evidence type="ECO:0000305" key="2"/>